<protein>
    <recommendedName>
        <fullName evidence="1">Minor capsid protein L2</fullName>
    </recommendedName>
</protein>
<name>VL2_HPV61</name>
<dbReference type="EMBL" id="U31793">
    <property type="protein sequence ID" value="AAA79497.1"/>
    <property type="molecule type" value="Genomic_DNA"/>
</dbReference>
<dbReference type="RefSeq" id="NP_043449.1">
    <property type="nucleotide sequence ID" value="NC_001694.1"/>
</dbReference>
<dbReference type="GeneID" id="1403317"/>
<dbReference type="KEGG" id="vg:1403317"/>
<dbReference type="Proteomes" id="UP000007670">
    <property type="component" value="Genome"/>
</dbReference>
<dbReference type="GO" id="GO:0043657">
    <property type="term" value="C:host cell"/>
    <property type="evidence" value="ECO:0007669"/>
    <property type="project" value="GOC"/>
</dbReference>
<dbReference type="GO" id="GO:0044174">
    <property type="term" value="C:host cell endosome"/>
    <property type="evidence" value="ECO:0007669"/>
    <property type="project" value="UniProtKB-KW"/>
</dbReference>
<dbReference type="GO" id="GO:0044177">
    <property type="term" value="C:host cell Golgi apparatus"/>
    <property type="evidence" value="ECO:0007669"/>
    <property type="project" value="UniProtKB-SubCell"/>
</dbReference>
<dbReference type="GO" id="GO:0042025">
    <property type="term" value="C:host cell nucleus"/>
    <property type="evidence" value="ECO:0007669"/>
    <property type="project" value="UniProtKB-SubCell"/>
</dbReference>
<dbReference type="GO" id="GO:0019028">
    <property type="term" value="C:viral capsid"/>
    <property type="evidence" value="ECO:0007669"/>
    <property type="project" value="UniProtKB-UniRule"/>
</dbReference>
<dbReference type="GO" id="GO:0003677">
    <property type="term" value="F:DNA binding"/>
    <property type="evidence" value="ECO:0007669"/>
    <property type="project" value="UniProtKB-UniRule"/>
</dbReference>
<dbReference type="GO" id="GO:0005198">
    <property type="term" value="F:structural molecule activity"/>
    <property type="evidence" value="ECO:0007669"/>
    <property type="project" value="UniProtKB-UniRule"/>
</dbReference>
<dbReference type="GO" id="GO:0075521">
    <property type="term" value="P:microtubule-dependent intracellular transport of viral material towards nucleus"/>
    <property type="evidence" value="ECO:0007669"/>
    <property type="project" value="UniProtKB-UniRule"/>
</dbReference>
<dbReference type="GO" id="GO:0046718">
    <property type="term" value="P:symbiont entry into host cell"/>
    <property type="evidence" value="ECO:0007669"/>
    <property type="project" value="UniProtKB-KW"/>
</dbReference>
<dbReference type="GO" id="GO:0075732">
    <property type="term" value="P:viral penetration into host nucleus"/>
    <property type="evidence" value="ECO:0007669"/>
    <property type="project" value="UniProtKB-KW"/>
</dbReference>
<dbReference type="HAMAP" id="MF_04003">
    <property type="entry name" value="PPV_L2"/>
    <property type="match status" value="1"/>
</dbReference>
<dbReference type="InterPro" id="IPR000784">
    <property type="entry name" value="Late_L2"/>
</dbReference>
<dbReference type="Pfam" id="PF00513">
    <property type="entry name" value="Late_protein_L2"/>
    <property type="match status" value="1"/>
</dbReference>
<organism>
    <name type="scientific">Human papillomavirus type 61</name>
    <dbReference type="NCBI Taxonomy" id="37116"/>
    <lineage>
        <taxon>Viruses</taxon>
        <taxon>Monodnaviria</taxon>
        <taxon>Shotokuvirae</taxon>
        <taxon>Cossaviricota</taxon>
        <taxon>Papovaviricetes</taxon>
        <taxon>Zurhausenvirales</taxon>
        <taxon>Papillomaviridae</taxon>
        <taxon>Firstpapillomavirinae</taxon>
        <taxon>Alphapapillomavirus</taxon>
        <taxon>Alphapapillomavirus 3</taxon>
    </lineage>
</organism>
<proteinExistence type="inferred from homology"/>
<keyword id="KW-0167">Capsid protein</keyword>
<keyword id="KW-1176">Cytoplasmic inwards viral transport</keyword>
<keyword id="KW-1015">Disulfide bond</keyword>
<keyword id="KW-0238">DNA-binding</keyword>
<keyword id="KW-1039">Host endosome</keyword>
<keyword id="KW-1040">Host Golgi apparatus</keyword>
<keyword id="KW-1048">Host nucleus</keyword>
<keyword id="KW-0945">Host-virus interaction</keyword>
<keyword id="KW-0426">Late protein</keyword>
<keyword id="KW-1177">Microtubular inwards viral transport</keyword>
<keyword id="KW-0597">Phosphoprotein</keyword>
<keyword id="KW-1185">Reference proteome</keyword>
<keyword id="KW-1163">Viral penetration into host nucleus</keyword>
<keyword id="KW-0946">Virion</keyword>
<keyword id="KW-1160">Virus entry into host cell</keyword>
<comment type="function">
    <text evidence="1">Minor protein of the capsid that localizes along the inner surface of the virion, within the central cavities beneath the L1 pentamers. Plays a role in capsid stabilization through interaction with the major capsid protein L1. Once the virion enters the host cell, L2 escorts the genomic DNA into the nucleus by promoting escape from the endosomal compartments and traffic through the host Golgi network. Mechanistically, the C-terminus of L2 possesses a cell-penetrating peptide that protudes from the host endosome, interacts with host cytoplasmic retromer cargo and thereby mediates the capsid delivery to the host trans-Golgi network. Plays a role through its interaction with host dynein in the intracellular microtubule-dependent transport of viral capsid toward the nucleus. Mediates the viral genome import into the nucleus through binding to host importins. Once within the nucleus, L2 localizes viral genomes to host PML bodies in order to activate early gene expression for establishment of infection. Later on, promotes late gene expression by interacting with the viral E2 protein and by inhibiting its transcriptional activation functions. During virion assembly, encapsidates the genome by direct interaction with the viral DNA.</text>
</comment>
<comment type="subunit">
    <text evidence="1">Interacts with major capsid protein L1. Interacts with E2; this interaction inhibits E2 transcriptional activity but not the DNA replication function E2. Interacts with host GADD45GIP1. Interacts with host HSPA8; this interaction is required for L2 nuclear translocation. Interacts with host importins KPNB2 and KPNB3. Forms a complex with importin alpha2-beta1 heterodimers via interaction with the importin alpha2 adapter. Interacts with host DYNLT1; this interaction is essential for virus intracellular transport during entry. Interacts (via C-terminus) with host retromer subunits VPS35 and VPS29.</text>
</comment>
<comment type="subcellular location">
    <subcellularLocation>
        <location evidence="1">Virion</location>
    </subcellularLocation>
    <subcellularLocation>
        <location evidence="1">Host nucleus</location>
    </subcellularLocation>
    <subcellularLocation>
        <location evidence="1">Host early endosome</location>
    </subcellularLocation>
    <subcellularLocation>
        <location evidence="1">Host Golgi apparatus</location>
    </subcellularLocation>
</comment>
<comment type="PTM">
    <text evidence="1">Highly phosphorylated.</text>
</comment>
<comment type="similarity">
    <text evidence="1">Belongs to the papillomaviridae L2 protein family.</text>
</comment>
<evidence type="ECO:0000255" key="1">
    <source>
        <dbReference type="HAMAP-Rule" id="MF_04003"/>
    </source>
</evidence>
<accession>Q80953</accession>
<feature type="chain" id="PRO_0000133626" description="Minor capsid protein L2">
    <location>
        <begin position="1"/>
        <end position="459"/>
    </location>
</feature>
<feature type="short sequence motif" description="Nuclear localization signal" evidence="1">
    <location>
        <begin position="1"/>
        <end position="9"/>
    </location>
</feature>
<feature type="short sequence motif" description="Nuclear localization signal" evidence="1">
    <location>
        <begin position="439"/>
        <end position="447"/>
    </location>
</feature>
<feature type="disulfide bond" evidence="1">
    <location>
        <begin position="18"/>
        <end position="24"/>
    </location>
</feature>
<reference key="1">
    <citation type="submission" date="1995-10" db="EMBL/GenBank/DDBJ databases">
        <authorList>
            <person name="Delius H."/>
        </authorList>
    </citation>
    <scope>NUCLEOTIDE SEQUENCE [GENOMIC DNA]</scope>
</reference>
<gene>
    <name evidence="1" type="primary">L2</name>
</gene>
<sequence length="459" mass="48708">MALKRRKRASATDLYRTCKQSGTCPPDVVPKVEGDTLADRILKWASLGVFFGGLGIGTGSGTGGRTGYVPIGTRPPTVVDIGPVSRPPVVIDPVGAADPSIVTLVEESSVIEAGATVPTFSGSGGFNVTSSSTTTPAVLDITPSGGSVQVSSTSFINPLFTEPSIIEPPQAGDLAGHVISSTPTAGSHSFEEIPMHTFATSEGPGSSTPLPGIRRLARPRLNLYSKANQQIKVANPTFMSDPASLITYDNPIFDPEETIIFEHPSIYTPPDPDFLDIVSLHRPALTSRQGTVRFSRLGQRATLRTRSGRRIGARVHFYHDISPIPSDAVELQPLVPSSSPSITYDIYADPEVLDLPAQHTQPTLTVQGPSLSAASASTKVHNVTVPLATGLDTPVTSGPDVDFAHAPAPVPAVPYVPATHPHSIYIQGSDFYLLPAYVFFPKRRKRVPYSFSDGFVAAW</sequence>
<organismHost>
    <name type="scientific">Homo sapiens</name>
    <name type="common">Human</name>
    <dbReference type="NCBI Taxonomy" id="9606"/>
</organismHost>